<name>YCEK_ECO57</name>
<accession>P0AB32</accession>
<accession>P45806</accession>
<accession>P75921</accession>
<sequence>MRLIVVSIMVTLLSGCGSIISRTIPGQGHGNQYYPGVQWDVRDSAWRYVTILDLPFSLVFDTLLLPIDIHHGPYE</sequence>
<proteinExistence type="inferred from homology"/>
<evidence type="ECO:0000255" key="1"/>
<evidence type="ECO:0000305" key="2"/>
<feature type="signal peptide" evidence="1">
    <location>
        <begin position="1"/>
        <end position="21"/>
    </location>
</feature>
<feature type="chain" id="PRO_0000042570" description="Uncharacterized protein YceK">
    <location>
        <begin position="22"/>
        <end position="75"/>
    </location>
</feature>
<comment type="similarity">
    <text evidence="2">To E.coli YidQ.</text>
</comment>
<dbReference type="EMBL" id="AE005174">
    <property type="protein sequence ID" value="AAG55796.1"/>
    <property type="molecule type" value="Genomic_DNA"/>
</dbReference>
<dbReference type="EMBL" id="BA000007">
    <property type="protein sequence ID" value="BAB34851.1"/>
    <property type="molecule type" value="Genomic_DNA"/>
</dbReference>
<dbReference type="PIR" id="D90807">
    <property type="entry name" value="D90807"/>
</dbReference>
<dbReference type="PIR" id="H85666">
    <property type="entry name" value="H85666"/>
</dbReference>
<dbReference type="RefSeq" id="NP_309455.1">
    <property type="nucleotide sequence ID" value="NC_002695.1"/>
</dbReference>
<dbReference type="RefSeq" id="WP_001237205.1">
    <property type="nucleotide sequence ID" value="NZ_VOAI01000018.1"/>
</dbReference>
<dbReference type="STRING" id="155864.Z1685"/>
<dbReference type="GeneID" id="912402"/>
<dbReference type="KEGG" id="ece:Z1685"/>
<dbReference type="KEGG" id="ecs:ECs_1428"/>
<dbReference type="PATRIC" id="fig|386585.9.peg.1530"/>
<dbReference type="eggNOG" id="COG5645">
    <property type="taxonomic scope" value="Bacteria"/>
</dbReference>
<dbReference type="HOGENOM" id="CLU_164795_0_0_6"/>
<dbReference type="OMA" id="PWRFIAI"/>
<dbReference type="Proteomes" id="UP000000558">
    <property type="component" value="Chromosome"/>
</dbReference>
<dbReference type="Proteomes" id="UP000002519">
    <property type="component" value="Chromosome"/>
</dbReference>
<dbReference type="InterPro" id="IPR010780">
    <property type="entry name" value="DUF1375"/>
</dbReference>
<dbReference type="NCBIfam" id="NF007555">
    <property type="entry name" value="PRK10175.1"/>
    <property type="match status" value="1"/>
</dbReference>
<dbReference type="Pfam" id="PF07119">
    <property type="entry name" value="DUF1375"/>
    <property type="match status" value="1"/>
</dbReference>
<dbReference type="PROSITE" id="PS51257">
    <property type="entry name" value="PROKAR_LIPOPROTEIN"/>
    <property type="match status" value="1"/>
</dbReference>
<keyword id="KW-1185">Reference proteome</keyword>
<keyword id="KW-0732">Signal</keyword>
<protein>
    <recommendedName>
        <fullName>Uncharacterized protein YceK</fullName>
    </recommendedName>
</protein>
<reference key="1">
    <citation type="journal article" date="2001" name="Nature">
        <title>Genome sequence of enterohaemorrhagic Escherichia coli O157:H7.</title>
        <authorList>
            <person name="Perna N.T."/>
            <person name="Plunkett G. III"/>
            <person name="Burland V."/>
            <person name="Mau B."/>
            <person name="Glasner J.D."/>
            <person name="Rose D.J."/>
            <person name="Mayhew G.F."/>
            <person name="Evans P.S."/>
            <person name="Gregor J."/>
            <person name="Kirkpatrick H.A."/>
            <person name="Posfai G."/>
            <person name="Hackett J."/>
            <person name="Klink S."/>
            <person name="Boutin A."/>
            <person name="Shao Y."/>
            <person name="Miller L."/>
            <person name="Grotbeck E.J."/>
            <person name="Davis N.W."/>
            <person name="Lim A."/>
            <person name="Dimalanta E.T."/>
            <person name="Potamousis K."/>
            <person name="Apodaca J."/>
            <person name="Anantharaman T.S."/>
            <person name="Lin J."/>
            <person name="Yen G."/>
            <person name="Schwartz D.C."/>
            <person name="Welch R.A."/>
            <person name="Blattner F.R."/>
        </authorList>
    </citation>
    <scope>NUCLEOTIDE SEQUENCE [LARGE SCALE GENOMIC DNA]</scope>
    <source>
        <strain>O157:H7 / EDL933 / ATCC 700927 / EHEC</strain>
    </source>
</reference>
<reference key="2">
    <citation type="journal article" date="2001" name="DNA Res.">
        <title>Complete genome sequence of enterohemorrhagic Escherichia coli O157:H7 and genomic comparison with a laboratory strain K-12.</title>
        <authorList>
            <person name="Hayashi T."/>
            <person name="Makino K."/>
            <person name="Ohnishi M."/>
            <person name="Kurokawa K."/>
            <person name="Ishii K."/>
            <person name="Yokoyama K."/>
            <person name="Han C.-G."/>
            <person name="Ohtsubo E."/>
            <person name="Nakayama K."/>
            <person name="Murata T."/>
            <person name="Tanaka M."/>
            <person name="Tobe T."/>
            <person name="Iida T."/>
            <person name="Takami H."/>
            <person name="Honda T."/>
            <person name="Sasakawa C."/>
            <person name="Ogasawara N."/>
            <person name="Yasunaga T."/>
            <person name="Kuhara S."/>
            <person name="Shiba T."/>
            <person name="Hattori M."/>
            <person name="Shinagawa H."/>
        </authorList>
    </citation>
    <scope>NUCLEOTIDE SEQUENCE [LARGE SCALE GENOMIC DNA]</scope>
    <source>
        <strain>O157:H7 / Sakai / RIMD 0509952 / EHEC</strain>
    </source>
</reference>
<gene>
    <name type="primary">yceK</name>
    <name type="ordered locus">Z1685</name>
    <name type="ordered locus">ECs1428</name>
</gene>
<organism>
    <name type="scientific">Escherichia coli O157:H7</name>
    <dbReference type="NCBI Taxonomy" id="83334"/>
    <lineage>
        <taxon>Bacteria</taxon>
        <taxon>Pseudomonadati</taxon>
        <taxon>Pseudomonadota</taxon>
        <taxon>Gammaproteobacteria</taxon>
        <taxon>Enterobacterales</taxon>
        <taxon>Enterobacteriaceae</taxon>
        <taxon>Escherichia</taxon>
    </lineage>
</organism>